<proteinExistence type="inferred from homology"/>
<protein>
    <recommendedName>
        <fullName evidence="1">Pyrimidine/purine nucleoside phosphorylase</fullName>
        <ecNumber evidence="1">2.4.2.1</ecNumber>
        <ecNumber evidence="1">2.4.2.2</ecNumber>
    </recommendedName>
    <alternativeName>
        <fullName evidence="1">Adenosine phosphorylase</fullName>
    </alternativeName>
    <alternativeName>
        <fullName evidence="1">Cytidine phosphorylase</fullName>
    </alternativeName>
    <alternativeName>
        <fullName evidence="1">Guanosine phosphorylase</fullName>
    </alternativeName>
    <alternativeName>
        <fullName evidence="1">Inosine phosphorylase</fullName>
    </alternativeName>
    <alternativeName>
        <fullName evidence="1">Thymidine phosphorylase</fullName>
    </alternativeName>
    <alternativeName>
        <fullName evidence="1">Uridine phosphorylase</fullName>
    </alternativeName>
    <alternativeName>
        <fullName evidence="1">Xanthosine phosphorylase</fullName>
    </alternativeName>
</protein>
<sequence>MTSATQFDNVSVVKRANVYFDGKCVSHTVLFPDGTRKTLGVILPCALNFGTDAAELMEVQAGKCRVKLDGSSEWQTYGAGESFSVPGKSRFDIEVLETLDYVCSYL</sequence>
<dbReference type="EC" id="2.4.2.1" evidence="1"/>
<dbReference type="EC" id="2.4.2.2" evidence="1"/>
<dbReference type="EMBL" id="CP001026">
    <property type="protein sequence ID" value="ACB66887.1"/>
    <property type="molecule type" value="Genomic_DNA"/>
</dbReference>
<dbReference type="RefSeq" id="WP_012366195.1">
    <property type="nucleotide sequence ID" value="NC_010552.1"/>
</dbReference>
<dbReference type="SMR" id="B1YX25"/>
<dbReference type="KEGG" id="bac:BamMC406_4431"/>
<dbReference type="HOGENOM" id="CLU_157874_1_0_4"/>
<dbReference type="OrthoDB" id="9793848at2"/>
<dbReference type="Proteomes" id="UP000001680">
    <property type="component" value="Chromosome 2"/>
</dbReference>
<dbReference type="GO" id="GO:0005829">
    <property type="term" value="C:cytosol"/>
    <property type="evidence" value="ECO:0007669"/>
    <property type="project" value="TreeGrafter"/>
</dbReference>
<dbReference type="GO" id="GO:0047975">
    <property type="term" value="F:guanosine phosphorylase activity"/>
    <property type="evidence" value="ECO:0007669"/>
    <property type="project" value="UniProtKB-EC"/>
</dbReference>
<dbReference type="GO" id="GO:0004731">
    <property type="term" value="F:purine-nucleoside phosphorylase activity"/>
    <property type="evidence" value="ECO:0007669"/>
    <property type="project" value="UniProtKB-UniRule"/>
</dbReference>
<dbReference type="GO" id="GO:0009032">
    <property type="term" value="F:thymidine phosphorylase activity"/>
    <property type="evidence" value="ECO:0007669"/>
    <property type="project" value="UniProtKB-EC"/>
</dbReference>
<dbReference type="GO" id="GO:0004850">
    <property type="term" value="F:uridine phosphorylase activity"/>
    <property type="evidence" value="ECO:0007669"/>
    <property type="project" value="UniProtKB-EC"/>
</dbReference>
<dbReference type="CDD" id="cd20296">
    <property type="entry name" value="cupin_PpnP-like"/>
    <property type="match status" value="1"/>
</dbReference>
<dbReference type="Gene3D" id="2.60.120.10">
    <property type="entry name" value="Jelly Rolls"/>
    <property type="match status" value="1"/>
</dbReference>
<dbReference type="HAMAP" id="MF_01537">
    <property type="entry name" value="Nucleos_phosphorylase_PpnP"/>
    <property type="match status" value="1"/>
</dbReference>
<dbReference type="InterPro" id="IPR009664">
    <property type="entry name" value="Ppnp"/>
</dbReference>
<dbReference type="InterPro" id="IPR014710">
    <property type="entry name" value="RmlC-like_jellyroll"/>
</dbReference>
<dbReference type="InterPro" id="IPR011051">
    <property type="entry name" value="RmlC_Cupin_sf"/>
</dbReference>
<dbReference type="PANTHER" id="PTHR36540">
    <property type="entry name" value="PYRIMIDINE/PURINE NUCLEOSIDE PHOSPHORYLASE"/>
    <property type="match status" value="1"/>
</dbReference>
<dbReference type="PANTHER" id="PTHR36540:SF1">
    <property type="entry name" value="PYRIMIDINE_PURINE NUCLEOSIDE PHOSPHORYLASE"/>
    <property type="match status" value="1"/>
</dbReference>
<dbReference type="Pfam" id="PF06865">
    <property type="entry name" value="Ppnp"/>
    <property type="match status" value="1"/>
</dbReference>
<dbReference type="SUPFAM" id="SSF51182">
    <property type="entry name" value="RmlC-like cupins"/>
    <property type="match status" value="1"/>
</dbReference>
<keyword id="KW-0328">Glycosyltransferase</keyword>
<keyword id="KW-0808">Transferase</keyword>
<name>PPNP_BURA4</name>
<reference key="1">
    <citation type="submission" date="2008-04" db="EMBL/GenBank/DDBJ databases">
        <title>Complete sequence of chromosome 2 of Burkholderia ambifaria MC40-6.</title>
        <authorList>
            <person name="Copeland A."/>
            <person name="Lucas S."/>
            <person name="Lapidus A."/>
            <person name="Glavina del Rio T."/>
            <person name="Dalin E."/>
            <person name="Tice H."/>
            <person name="Pitluck S."/>
            <person name="Chain P."/>
            <person name="Malfatti S."/>
            <person name="Shin M."/>
            <person name="Vergez L."/>
            <person name="Lang D."/>
            <person name="Schmutz J."/>
            <person name="Larimer F."/>
            <person name="Land M."/>
            <person name="Hauser L."/>
            <person name="Kyrpides N."/>
            <person name="Lykidis A."/>
            <person name="Ramette A."/>
            <person name="Konstantinidis K."/>
            <person name="Tiedje J."/>
            <person name="Richardson P."/>
        </authorList>
    </citation>
    <scope>NUCLEOTIDE SEQUENCE [LARGE SCALE GENOMIC DNA]</scope>
    <source>
        <strain>MC40-6</strain>
    </source>
</reference>
<gene>
    <name evidence="1" type="primary">ppnP</name>
    <name type="ordered locus">BamMC406_4431</name>
</gene>
<accession>B1YX25</accession>
<comment type="function">
    <text evidence="1">Catalyzes the phosphorolysis of diverse nucleosides, yielding D-ribose 1-phosphate and the respective free bases. Can use uridine, adenosine, guanosine, cytidine, thymidine, inosine and xanthosine as substrates. Also catalyzes the reverse reactions.</text>
</comment>
<comment type="catalytic activity">
    <reaction evidence="1">
        <text>a purine D-ribonucleoside + phosphate = a purine nucleobase + alpha-D-ribose 1-phosphate</text>
        <dbReference type="Rhea" id="RHEA:19805"/>
        <dbReference type="ChEBI" id="CHEBI:26386"/>
        <dbReference type="ChEBI" id="CHEBI:43474"/>
        <dbReference type="ChEBI" id="CHEBI:57720"/>
        <dbReference type="ChEBI" id="CHEBI:142355"/>
        <dbReference type="EC" id="2.4.2.1"/>
    </reaction>
</comment>
<comment type="catalytic activity">
    <reaction evidence="1">
        <text>adenosine + phosphate = alpha-D-ribose 1-phosphate + adenine</text>
        <dbReference type="Rhea" id="RHEA:27642"/>
        <dbReference type="ChEBI" id="CHEBI:16335"/>
        <dbReference type="ChEBI" id="CHEBI:16708"/>
        <dbReference type="ChEBI" id="CHEBI:43474"/>
        <dbReference type="ChEBI" id="CHEBI:57720"/>
        <dbReference type="EC" id="2.4.2.1"/>
    </reaction>
</comment>
<comment type="catalytic activity">
    <reaction evidence="1">
        <text>cytidine + phosphate = cytosine + alpha-D-ribose 1-phosphate</text>
        <dbReference type="Rhea" id="RHEA:52540"/>
        <dbReference type="ChEBI" id="CHEBI:16040"/>
        <dbReference type="ChEBI" id="CHEBI:17562"/>
        <dbReference type="ChEBI" id="CHEBI:43474"/>
        <dbReference type="ChEBI" id="CHEBI:57720"/>
        <dbReference type="EC" id="2.4.2.2"/>
    </reaction>
</comment>
<comment type="catalytic activity">
    <reaction evidence="1">
        <text>guanosine + phosphate = alpha-D-ribose 1-phosphate + guanine</text>
        <dbReference type="Rhea" id="RHEA:13233"/>
        <dbReference type="ChEBI" id="CHEBI:16235"/>
        <dbReference type="ChEBI" id="CHEBI:16750"/>
        <dbReference type="ChEBI" id="CHEBI:43474"/>
        <dbReference type="ChEBI" id="CHEBI:57720"/>
        <dbReference type="EC" id="2.4.2.1"/>
    </reaction>
</comment>
<comment type="catalytic activity">
    <reaction evidence="1">
        <text>inosine + phosphate = alpha-D-ribose 1-phosphate + hypoxanthine</text>
        <dbReference type="Rhea" id="RHEA:27646"/>
        <dbReference type="ChEBI" id="CHEBI:17368"/>
        <dbReference type="ChEBI" id="CHEBI:17596"/>
        <dbReference type="ChEBI" id="CHEBI:43474"/>
        <dbReference type="ChEBI" id="CHEBI:57720"/>
        <dbReference type="EC" id="2.4.2.1"/>
    </reaction>
</comment>
<comment type="catalytic activity">
    <reaction evidence="1">
        <text>thymidine + phosphate = 2-deoxy-alpha-D-ribose 1-phosphate + thymine</text>
        <dbReference type="Rhea" id="RHEA:16037"/>
        <dbReference type="ChEBI" id="CHEBI:17748"/>
        <dbReference type="ChEBI" id="CHEBI:17821"/>
        <dbReference type="ChEBI" id="CHEBI:43474"/>
        <dbReference type="ChEBI" id="CHEBI:57259"/>
        <dbReference type="EC" id="2.4.2.2"/>
    </reaction>
</comment>
<comment type="catalytic activity">
    <reaction evidence="1">
        <text>uridine + phosphate = alpha-D-ribose 1-phosphate + uracil</text>
        <dbReference type="Rhea" id="RHEA:24388"/>
        <dbReference type="ChEBI" id="CHEBI:16704"/>
        <dbReference type="ChEBI" id="CHEBI:17568"/>
        <dbReference type="ChEBI" id="CHEBI:43474"/>
        <dbReference type="ChEBI" id="CHEBI:57720"/>
        <dbReference type="EC" id="2.4.2.2"/>
    </reaction>
</comment>
<comment type="catalytic activity">
    <reaction evidence="1">
        <text>xanthosine + phosphate = alpha-D-ribose 1-phosphate + xanthine</text>
        <dbReference type="Rhea" id="RHEA:27638"/>
        <dbReference type="ChEBI" id="CHEBI:17712"/>
        <dbReference type="ChEBI" id="CHEBI:18107"/>
        <dbReference type="ChEBI" id="CHEBI:43474"/>
        <dbReference type="ChEBI" id="CHEBI:57720"/>
        <dbReference type="EC" id="2.4.2.1"/>
    </reaction>
</comment>
<comment type="similarity">
    <text evidence="1">Belongs to the nucleoside phosphorylase PpnP family.</text>
</comment>
<evidence type="ECO:0000255" key="1">
    <source>
        <dbReference type="HAMAP-Rule" id="MF_01537"/>
    </source>
</evidence>
<organism>
    <name type="scientific">Burkholderia ambifaria (strain MC40-6)</name>
    <dbReference type="NCBI Taxonomy" id="398577"/>
    <lineage>
        <taxon>Bacteria</taxon>
        <taxon>Pseudomonadati</taxon>
        <taxon>Pseudomonadota</taxon>
        <taxon>Betaproteobacteria</taxon>
        <taxon>Burkholderiales</taxon>
        <taxon>Burkholderiaceae</taxon>
        <taxon>Burkholderia</taxon>
        <taxon>Burkholderia cepacia complex</taxon>
    </lineage>
</organism>
<feature type="chain" id="PRO_1000198648" description="Pyrimidine/purine nucleoside phosphorylase">
    <location>
        <begin position="1"/>
        <end position="106"/>
    </location>
</feature>